<keyword id="KW-0255">Endonuclease</keyword>
<keyword id="KW-0378">Hydrolase</keyword>
<keyword id="KW-0540">Nuclease</keyword>
<keyword id="KW-1185">Reference proteome</keyword>
<keyword id="KW-0819">tRNA processing</keyword>
<protein>
    <recommendedName>
        <fullName evidence="1">RNA-free ribonuclease P</fullName>
        <shortName evidence="1">RNA-free RNase P</shortName>
        <ecNumber evidence="1">3.1.26.5</ecNumber>
    </recommendedName>
    <alternativeName>
        <fullName evidence="1">Protein-only RNase P</fullName>
    </alternativeName>
</protein>
<dbReference type="EC" id="3.1.26.5" evidence="1"/>
<dbReference type="EMBL" id="AE000782">
    <property type="protein sequence ID" value="AAB89319.1"/>
    <property type="molecule type" value="Genomic_DNA"/>
</dbReference>
<dbReference type="PIR" id="G69491">
    <property type="entry name" value="G69491"/>
</dbReference>
<dbReference type="RefSeq" id="WP_010879429.1">
    <property type="nucleotide sequence ID" value="NC_000917.1"/>
</dbReference>
<dbReference type="SMR" id="O28343"/>
<dbReference type="STRING" id="224325.AF_1936"/>
<dbReference type="PaxDb" id="224325-AF_1936"/>
<dbReference type="EnsemblBacteria" id="AAB89319">
    <property type="protein sequence ID" value="AAB89319"/>
    <property type="gene ID" value="AF_1936"/>
</dbReference>
<dbReference type="KEGG" id="afu:AF_1936"/>
<dbReference type="eggNOG" id="arCOG00720">
    <property type="taxonomic scope" value="Archaea"/>
</dbReference>
<dbReference type="HOGENOM" id="CLU_109672_0_0_2"/>
<dbReference type="OrthoDB" id="95197at2157"/>
<dbReference type="PhylomeDB" id="O28343"/>
<dbReference type="Proteomes" id="UP000002199">
    <property type="component" value="Chromosome"/>
</dbReference>
<dbReference type="GO" id="GO:0004526">
    <property type="term" value="F:ribonuclease P activity"/>
    <property type="evidence" value="ECO:0007669"/>
    <property type="project" value="UniProtKB-UniRule"/>
</dbReference>
<dbReference type="GO" id="GO:0001682">
    <property type="term" value="P:tRNA 5'-leader removal"/>
    <property type="evidence" value="ECO:0007669"/>
    <property type="project" value="UniProtKB-UniRule"/>
</dbReference>
<dbReference type="CDD" id="cd18691">
    <property type="entry name" value="PIN_VapC-like"/>
    <property type="match status" value="1"/>
</dbReference>
<dbReference type="HAMAP" id="MF_01078">
    <property type="entry name" value="RNA_free_RNase_P"/>
    <property type="match status" value="1"/>
</dbReference>
<dbReference type="InterPro" id="IPR014856">
    <property type="entry name" value="RNA_free_RNase_P"/>
</dbReference>
<dbReference type="NCBIfam" id="NF003343">
    <property type="entry name" value="PRK04358.1-4"/>
    <property type="match status" value="1"/>
</dbReference>
<dbReference type="NCBIfam" id="TIGR03875">
    <property type="entry name" value="RNA_lig_partner"/>
    <property type="match status" value="1"/>
</dbReference>
<dbReference type="PANTHER" id="PTHR41173:SF1">
    <property type="entry name" value="RNA-FREE RIBONUCLEASE P"/>
    <property type="match status" value="1"/>
</dbReference>
<dbReference type="PANTHER" id="PTHR41173">
    <property type="entry name" value="UPF0278 PROTEIN TK1425"/>
    <property type="match status" value="1"/>
</dbReference>
<dbReference type="Pfam" id="PF08745">
    <property type="entry name" value="PIN_5"/>
    <property type="match status" value="1"/>
</dbReference>
<gene>
    <name type="ordered locus">AF_1936</name>
</gene>
<sequence length="227" mass="26087">MRQRFVLDTTAITDAGLRIKEGYESLCESAAEVLDLIALARLKLDISCYIPYPSVYTELTSFLKRYGCDEEIFTKLDTWLVKKTPNRYEVKIPAAIFYEYIITVRQKMNRGRRLAEEYILESSAITAKLEDKSKIEEEIGALISKFRDKYRAVMRQGILDSAPDLDVLLLAKELEAGVVSSDAGIRKWSERLGLRFVEAAKFPRMLKEYLKLMGSKDIVGWFESEED</sequence>
<name>RFRNP_ARCFU</name>
<evidence type="ECO:0000255" key="1">
    <source>
        <dbReference type="HAMAP-Rule" id="MF_01078"/>
    </source>
</evidence>
<proteinExistence type="inferred from homology"/>
<reference key="1">
    <citation type="journal article" date="1997" name="Nature">
        <title>The complete genome sequence of the hyperthermophilic, sulphate-reducing archaeon Archaeoglobus fulgidus.</title>
        <authorList>
            <person name="Klenk H.-P."/>
            <person name="Clayton R.A."/>
            <person name="Tomb J.-F."/>
            <person name="White O."/>
            <person name="Nelson K.E."/>
            <person name="Ketchum K.A."/>
            <person name="Dodson R.J."/>
            <person name="Gwinn M.L."/>
            <person name="Hickey E.K."/>
            <person name="Peterson J.D."/>
            <person name="Richardson D.L."/>
            <person name="Kerlavage A.R."/>
            <person name="Graham D.E."/>
            <person name="Kyrpides N.C."/>
            <person name="Fleischmann R.D."/>
            <person name="Quackenbush J."/>
            <person name="Lee N.H."/>
            <person name="Sutton G.G."/>
            <person name="Gill S.R."/>
            <person name="Kirkness E.F."/>
            <person name="Dougherty B.A."/>
            <person name="McKenney K."/>
            <person name="Adams M.D."/>
            <person name="Loftus B.J."/>
            <person name="Peterson S.N."/>
            <person name="Reich C.I."/>
            <person name="McNeil L.K."/>
            <person name="Badger J.H."/>
            <person name="Glodek A."/>
            <person name="Zhou L."/>
            <person name="Overbeek R."/>
            <person name="Gocayne J.D."/>
            <person name="Weidman J.F."/>
            <person name="McDonald L.A."/>
            <person name="Utterback T.R."/>
            <person name="Cotton M.D."/>
            <person name="Spriggs T."/>
            <person name="Artiach P."/>
            <person name="Kaine B.P."/>
            <person name="Sykes S.M."/>
            <person name="Sadow P.W."/>
            <person name="D'Andrea K.P."/>
            <person name="Bowman C."/>
            <person name="Fujii C."/>
            <person name="Garland S.A."/>
            <person name="Mason T.M."/>
            <person name="Olsen G.J."/>
            <person name="Fraser C.M."/>
            <person name="Smith H.O."/>
            <person name="Woese C.R."/>
            <person name="Venter J.C."/>
        </authorList>
    </citation>
    <scope>NUCLEOTIDE SEQUENCE [LARGE SCALE GENOMIC DNA]</scope>
    <source>
        <strain>ATCC 49558 / DSM 4304 / JCM 9628 / NBRC 100126 / VC-16</strain>
    </source>
</reference>
<feature type="chain" id="PRO_0000136077" description="RNA-free ribonuclease P">
    <location>
        <begin position="1"/>
        <end position="227"/>
    </location>
</feature>
<comment type="function">
    <text evidence="1">RNA-free RNase P that catalyzes the removal of the 5'-leader sequence from pre-tRNA to produce the mature 5'-terminus.</text>
</comment>
<comment type="catalytic activity">
    <reaction evidence="1">
        <text>Endonucleolytic cleavage of RNA, removing 5'-extranucleotides from tRNA precursor.</text>
        <dbReference type="EC" id="3.1.26.5"/>
    </reaction>
</comment>
<comment type="similarity">
    <text evidence="1">Belongs to the HARP family.</text>
</comment>
<accession>O28343</accession>
<organism>
    <name type="scientific">Archaeoglobus fulgidus (strain ATCC 49558 / DSM 4304 / JCM 9628 / NBRC 100126 / VC-16)</name>
    <dbReference type="NCBI Taxonomy" id="224325"/>
    <lineage>
        <taxon>Archaea</taxon>
        <taxon>Methanobacteriati</taxon>
        <taxon>Methanobacteriota</taxon>
        <taxon>Archaeoglobi</taxon>
        <taxon>Archaeoglobales</taxon>
        <taxon>Archaeoglobaceae</taxon>
        <taxon>Archaeoglobus</taxon>
    </lineage>
</organism>